<sequence>MTILNHTLGFPRVGLKRELKKAQESYWAGNSTQEELLNVGRELRARHWQQQQQAGVDLVPVGDFAWYDHVLTTSLLLGNVPERHQNADGSIDIDTLFRIGRGRAPTGKPAAAAEMTKWFNTNYHYMVPEFQQGQQFKLGWTQLLDEVDEALALGHKIKPVLLGPITYLWLGKVKGEQFDRLSLLNDILPVYQQVLAELAKRGIEWVQIDEPALVLELPQEWLDAYQPAYQALQGQVKLLLTTYFDSIGHNIDTIRALPVQGLHVDVVTGHDDLAVLNKNLPKEWLLSLGVINGRNVWRADLSSWFERLQPLVNSRPLWLGSSCSLLHSPIDLNEETRLDAEVKSWFAFALQKCAELALLTQALNAPNDAKLAELAAYSAPIRARRSSSRVHNAQVEQRLAAITSQDIERQLPYEARAETQRKRFNLPAWPTTTIGSFPQTTEIRGLRLDFKQGRLDGKNYRTGISEHIKHAIAEQERLGLDVLVHGEAERNDMVEYFGEHLDGFVFTQNGWVQSYGSRCVKPPVIIGDISRPEAITVEWAKYAQSLTEKPVKGMLTGPVTILCWSFPREDVSRETIAKQIALALRDEVEDLEKAGIGIIQIDEPALREGLPLRRADWQAYLQWAVDAFKLNAAVAQNDTQIHTHMCYCEFNDIMDSIAALDADVITIETSRSDMELLESFEDFAYPNEIGPGVYDIHSPNVPSVEWIEALLRKAAQRIPAERLWVNPDCGLKTRGWPETRQALANMVLAAQRLREEQV</sequence>
<feature type="chain" id="PRO_1000017294" description="5-methyltetrahydropteroyltriglutamate--homocysteine methyltransferase">
    <location>
        <begin position="1"/>
        <end position="758"/>
    </location>
</feature>
<feature type="active site" description="Proton donor" evidence="1">
    <location>
        <position position="697"/>
    </location>
</feature>
<feature type="binding site" evidence="1">
    <location>
        <begin position="17"/>
        <end position="20"/>
    </location>
    <ligand>
        <name>5-methyltetrahydropteroyltri-L-glutamate</name>
        <dbReference type="ChEBI" id="CHEBI:58207"/>
    </ligand>
</feature>
<feature type="binding site" evidence="1">
    <location>
        <position position="117"/>
    </location>
    <ligand>
        <name>5-methyltetrahydropteroyltri-L-glutamate</name>
        <dbReference type="ChEBI" id="CHEBI:58207"/>
    </ligand>
</feature>
<feature type="binding site" evidence="1">
    <location>
        <begin position="434"/>
        <end position="436"/>
    </location>
    <ligand>
        <name>L-homocysteine</name>
        <dbReference type="ChEBI" id="CHEBI:58199"/>
    </ligand>
</feature>
<feature type="binding site" evidence="1">
    <location>
        <begin position="434"/>
        <end position="436"/>
    </location>
    <ligand>
        <name>L-methionine</name>
        <dbReference type="ChEBI" id="CHEBI:57844"/>
    </ligand>
</feature>
<feature type="binding site" evidence="1">
    <location>
        <position position="487"/>
    </location>
    <ligand>
        <name>L-homocysteine</name>
        <dbReference type="ChEBI" id="CHEBI:58199"/>
    </ligand>
</feature>
<feature type="binding site" evidence="1">
    <location>
        <position position="487"/>
    </location>
    <ligand>
        <name>L-methionine</name>
        <dbReference type="ChEBI" id="CHEBI:57844"/>
    </ligand>
</feature>
<feature type="binding site" evidence="1">
    <location>
        <begin position="518"/>
        <end position="519"/>
    </location>
    <ligand>
        <name>5-methyltetrahydropteroyltri-L-glutamate</name>
        <dbReference type="ChEBI" id="CHEBI:58207"/>
    </ligand>
</feature>
<feature type="binding site" evidence="1">
    <location>
        <position position="564"/>
    </location>
    <ligand>
        <name>5-methyltetrahydropteroyltri-L-glutamate</name>
        <dbReference type="ChEBI" id="CHEBI:58207"/>
    </ligand>
</feature>
<feature type="binding site" evidence="1">
    <location>
        <position position="602"/>
    </location>
    <ligand>
        <name>L-homocysteine</name>
        <dbReference type="ChEBI" id="CHEBI:58199"/>
    </ligand>
</feature>
<feature type="binding site" evidence="1">
    <location>
        <position position="602"/>
    </location>
    <ligand>
        <name>L-methionine</name>
        <dbReference type="ChEBI" id="CHEBI:57844"/>
    </ligand>
</feature>
<feature type="binding site" evidence="1">
    <location>
        <position position="608"/>
    </location>
    <ligand>
        <name>5-methyltetrahydropteroyltri-L-glutamate</name>
        <dbReference type="ChEBI" id="CHEBI:58207"/>
    </ligand>
</feature>
<feature type="binding site" evidence="1">
    <location>
        <position position="644"/>
    </location>
    <ligand>
        <name>Zn(2+)</name>
        <dbReference type="ChEBI" id="CHEBI:29105"/>
        <note>catalytic</note>
    </ligand>
</feature>
<feature type="binding site" evidence="1">
    <location>
        <position position="646"/>
    </location>
    <ligand>
        <name>Zn(2+)</name>
        <dbReference type="ChEBI" id="CHEBI:29105"/>
        <note>catalytic</note>
    </ligand>
</feature>
<feature type="binding site" evidence="1">
    <location>
        <position position="668"/>
    </location>
    <ligand>
        <name>Zn(2+)</name>
        <dbReference type="ChEBI" id="CHEBI:29105"/>
        <note>catalytic</note>
    </ligand>
</feature>
<feature type="binding site" evidence="1">
    <location>
        <position position="729"/>
    </location>
    <ligand>
        <name>Zn(2+)</name>
        <dbReference type="ChEBI" id="CHEBI:29105"/>
        <note>catalytic</note>
    </ligand>
</feature>
<keyword id="KW-0028">Amino-acid biosynthesis</keyword>
<keyword id="KW-0479">Metal-binding</keyword>
<keyword id="KW-0486">Methionine biosynthesis</keyword>
<keyword id="KW-0489">Methyltransferase</keyword>
<keyword id="KW-0677">Repeat</keyword>
<keyword id="KW-0808">Transferase</keyword>
<keyword id="KW-0862">Zinc</keyword>
<accession>Q1CBG7</accession>
<evidence type="ECO:0000255" key="1">
    <source>
        <dbReference type="HAMAP-Rule" id="MF_00172"/>
    </source>
</evidence>
<comment type="function">
    <text evidence="1">Catalyzes the transfer of a methyl group from 5-methyltetrahydrofolate to homocysteine resulting in methionine formation.</text>
</comment>
<comment type="catalytic activity">
    <reaction evidence="1">
        <text>5-methyltetrahydropteroyltri-L-glutamate + L-homocysteine = tetrahydropteroyltri-L-glutamate + L-methionine</text>
        <dbReference type="Rhea" id="RHEA:21196"/>
        <dbReference type="ChEBI" id="CHEBI:57844"/>
        <dbReference type="ChEBI" id="CHEBI:58140"/>
        <dbReference type="ChEBI" id="CHEBI:58199"/>
        <dbReference type="ChEBI" id="CHEBI:58207"/>
        <dbReference type="EC" id="2.1.1.14"/>
    </reaction>
</comment>
<comment type="cofactor">
    <cofactor evidence="1">
        <name>Zn(2+)</name>
        <dbReference type="ChEBI" id="CHEBI:29105"/>
    </cofactor>
    <text evidence="1">Binds 1 zinc ion per subunit.</text>
</comment>
<comment type="pathway">
    <text evidence="1">Amino-acid biosynthesis; L-methionine biosynthesis via de novo pathway; L-methionine from L-homocysteine (MetE route): step 1/1.</text>
</comment>
<comment type="similarity">
    <text evidence="1">Belongs to the vitamin-B12 independent methionine synthase family.</text>
</comment>
<protein>
    <recommendedName>
        <fullName evidence="1">5-methyltetrahydropteroyltriglutamate--homocysteine methyltransferase</fullName>
        <ecNumber evidence="1">2.1.1.14</ecNumber>
    </recommendedName>
    <alternativeName>
        <fullName evidence="1">Cobalamin-independent methionine synthase</fullName>
    </alternativeName>
    <alternativeName>
        <fullName evidence="1">Methionine synthase, vitamin-B12 independent isozyme</fullName>
    </alternativeName>
</protein>
<organism>
    <name type="scientific">Yersinia pestis bv. Antiqua (strain Antiqua)</name>
    <dbReference type="NCBI Taxonomy" id="360102"/>
    <lineage>
        <taxon>Bacteria</taxon>
        <taxon>Pseudomonadati</taxon>
        <taxon>Pseudomonadota</taxon>
        <taxon>Gammaproteobacteria</taxon>
        <taxon>Enterobacterales</taxon>
        <taxon>Yersiniaceae</taxon>
        <taxon>Yersinia</taxon>
    </lineage>
</organism>
<name>METE_YERPA</name>
<reference key="1">
    <citation type="journal article" date="2006" name="J. Bacteriol.">
        <title>Complete genome sequence of Yersinia pestis strains Antiqua and Nepal516: evidence of gene reduction in an emerging pathogen.</title>
        <authorList>
            <person name="Chain P.S.G."/>
            <person name="Hu P."/>
            <person name="Malfatti S.A."/>
            <person name="Radnedge L."/>
            <person name="Larimer F."/>
            <person name="Vergez L.M."/>
            <person name="Worsham P."/>
            <person name="Chu M.C."/>
            <person name="Andersen G.L."/>
        </authorList>
    </citation>
    <scope>NUCLEOTIDE SEQUENCE [LARGE SCALE GENOMIC DNA]</scope>
    <source>
        <strain>Antiqua</strain>
    </source>
</reference>
<gene>
    <name evidence="1" type="primary">metE</name>
    <name type="ordered locus">YPA_0236</name>
</gene>
<proteinExistence type="inferred from homology"/>
<dbReference type="EC" id="2.1.1.14" evidence="1"/>
<dbReference type="EMBL" id="CP000308">
    <property type="protein sequence ID" value="ABG12205.1"/>
    <property type="molecule type" value="Genomic_DNA"/>
</dbReference>
<dbReference type="RefSeq" id="WP_002211526.1">
    <property type="nucleotide sequence ID" value="NZ_CP009906.1"/>
</dbReference>
<dbReference type="SMR" id="Q1CBG7"/>
<dbReference type="GeneID" id="57974920"/>
<dbReference type="KEGG" id="ypa:YPA_0236"/>
<dbReference type="UniPathway" id="UPA00051">
    <property type="reaction ID" value="UER00082"/>
</dbReference>
<dbReference type="Proteomes" id="UP000001971">
    <property type="component" value="Chromosome"/>
</dbReference>
<dbReference type="GO" id="GO:0003871">
    <property type="term" value="F:5-methyltetrahydropteroyltriglutamate-homocysteine S-methyltransferase activity"/>
    <property type="evidence" value="ECO:0007669"/>
    <property type="project" value="UniProtKB-UniRule"/>
</dbReference>
<dbReference type="GO" id="GO:0008270">
    <property type="term" value="F:zinc ion binding"/>
    <property type="evidence" value="ECO:0007669"/>
    <property type="project" value="InterPro"/>
</dbReference>
<dbReference type="GO" id="GO:0009086">
    <property type="term" value="P:methionine biosynthetic process"/>
    <property type="evidence" value="ECO:0007669"/>
    <property type="project" value="UniProtKB-UniRule"/>
</dbReference>
<dbReference type="GO" id="GO:0032259">
    <property type="term" value="P:methylation"/>
    <property type="evidence" value="ECO:0007669"/>
    <property type="project" value="UniProtKB-KW"/>
</dbReference>
<dbReference type="CDD" id="cd03311">
    <property type="entry name" value="CIMS_C_terminal_like"/>
    <property type="match status" value="1"/>
</dbReference>
<dbReference type="CDD" id="cd03312">
    <property type="entry name" value="CIMS_N_terminal_like"/>
    <property type="match status" value="1"/>
</dbReference>
<dbReference type="FunFam" id="3.20.20.210:FF:000002">
    <property type="entry name" value="5-methyltetrahydropteroyltriglutamate--homocysteine methyltransferase"/>
    <property type="match status" value="1"/>
</dbReference>
<dbReference type="FunFam" id="3.20.20.210:FF:000003">
    <property type="entry name" value="5-methyltetrahydropteroyltriglutamate--homocysteine methyltransferase"/>
    <property type="match status" value="1"/>
</dbReference>
<dbReference type="Gene3D" id="3.20.20.210">
    <property type="match status" value="2"/>
</dbReference>
<dbReference type="HAMAP" id="MF_00172">
    <property type="entry name" value="Meth_synth"/>
    <property type="match status" value="1"/>
</dbReference>
<dbReference type="InterPro" id="IPR013215">
    <property type="entry name" value="Cbl-indep_Met_Synth_N"/>
</dbReference>
<dbReference type="InterPro" id="IPR006276">
    <property type="entry name" value="Cobalamin-indep_Met_synthase"/>
</dbReference>
<dbReference type="InterPro" id="IPR002629">
    <property type="entry name" value="Met_Synth_C/arc"/>
</dbReference>
<dbReference type="InterPro" id="IPR038071">
    <property type="entry name" value="UROD/MetE-like_sf"/>
</dbReference>
<dbReference type="NCBIfam" id="TIGR01371">
    <property type="entry name" value="met_syn_B12ind"/>
    <property type="match status" value="1"/>
</dbReference>
<dbReference type="NCBIfam" id="NF003556">
    <property type="entry name" value="PRK05222.1"/>
    <property type="match status" value="1"/>
</dbReference>
<dbReference type="PANTHER" id="PTHR30519">
    <property type="entry name" value="5-METHYLTETRAHYDROPTEROYLTRIGLUTAMATE--HOMOCYSTEINE METHYLTRANSFERASE"/>
    <property type="match status" value="1"/>
</dbReference>
<dbReference type="Pfam" id="PF08267">
    <property type="entry name" value="Meth_synt_1"/>
    <property type="match status" value="1"/>
</dbReference>
<dbReference type="Pfam" id="PF01717">
    <property type="entry name" value="Meth_synt_2"/>
    <property type="match status" value="1"/>
</dbReference>
<dbReference type="PIRSF" id="PIRSF000382">
    <property type="entry name" value="MeTrfase_B12_ind"/>
    <property type="match status" value="1"/>
</dbReference>
<dbReference type="SUPFAM" id="SSF51726">
    <property type="entry name" value="UROD/MetE-like"/>
    <property type="match status" value="2"/>
</dbReference>